<accession>P32452</accession>
<accession>D6W0M9</accession>
<organism>
    <name type="scientific">Saccharomyces cerevisiae (strain ATCC 204508 / S288c)</name>
    <name type="common">Baker's yeast</name>
    <dbReference type="NCBI Taxonomy" id="559292"/>
    <lineage>
        <taxon>Eukaryota</taxon>
        <taxon>Fungi</taxon>
        <taxon>Dikarya</taxon>
        <taxon>Ascomycota</taxon>
        <taxon>Saccharomycotina</taxon>
        <taxon>Saccharomycetes</taxon>
        <taxon>Saccharomycetales</taxon>
        <taxon>Saccharomycetaceae</taxon>
        <taxon>Saccharomyces</taxon>
    </lineage>
</organism>
<proteinExistence type="evidence at protein level"/>
<feature type="chain" id="PRO_0000119206" description="Probable prephenate dehydratase">
    <location>
        <begin position="1"/>
        <end position="334"/>
    </location>
</feature>
<feature type="domain" description="Prephenate dehydratase" evidence="1">
    <location>
        <begin position="7"/>
        <end position="224"/>
    </location>
</feature>
<feature type="domain" description="ACT" evidence="2">
    <location>
        <begin position="244"/>
        <end position="322"/>
    </location>
</feature>
<name>PHA2_YEAST</name>
<protein>
    <recommendedName>
        <fullName evidence="6">Probable prephenate dehydratase</fullName>
        <shortName>PDT</shortName>
        <ecNumber evidence="7 8">4.2.1.51</ecNumber>
    </recommendedName>
    <alternativeName>
        <fullName>Phenylalanine-requiring protein 2</fullName>
    </alternativeName>
</protein>
<dbReference type="EC" id="4.2.1.51" evidence="7 8"/>
<dbReference type="EMBL" id="Z46259">
    <property type="protein sequence ID" value="CAA86380.1"/>
    <property type="status" value="ALT_INIT"/>
    <property type="molecule type" value="Genomic_DNA"/>
</dbReference>
<dbReference type="EMBL" id="Z71592">
    <property type="protein sequence ID" value="CAA96246.1"/>
    <property type="status" value="ALT_INIT"/>
    <property type="molecule type" value="Genomic_DNA"/>
</dbReference>
<dbReference type="EMBL" id="M87006">
    <property type="protein sequence ID" value="AAA34448.1"/>
    <property type="status" value="ALT_INIT"/>
    <property type="molecule type" value="Genomic_DNA"/>
</dbReference>
<dbReference type="EMBL" id="BK006947">
    <property type="protein sequence ID" value="DAA10245.1"/>
    <property type="molecule type" value="Genomic_DNA"/>
</dbReference>
<dbReference type="PIR" id="S59565">
    <property type="entry name" value="S59565"/>
</dbReference>
<dbReference type="RefSeq" id="NP_014083.2">
    <property type="nucleotide sequence ID" value="NM_001183154.1"/>
</dbReference>
<dbReference type="SMR" id="P32452"/>
<dbReference type="BioGRID" id="35523">
    <property type="interactions" value="65"/>
</dbReference>
<dbReference type="DIP" id="DIP-4269N"/>
<dbReference type="FunCoup" id="P32452">
    <property type="interactions" value="174"/>
</dbReference>
<dbReference type="IntAct" id="P32452">
    <property type="interactions" value="3"/>
</dbReference>
<dbReference type="STRING" id="4932.YNL316C"/>
<dbReference type="PaxDb" id="4932-YNL316C"/>
<dbReference type="PeptideAtlas" id="P32452"/>
<dbReference type="EnsemblFungi" id="YNL316C_mRNA">
    <property type="protein sequence ID" value="YNL316C"/>
    <property type="gene ID" value="YNL316C"/>
</dbReference>
<dbReference type="GeneID" id="855400"/>
<dbReference type="KEGG" id="sce:YNL316C"/>
<dbReference type="AGR" id="SGD:S000005260"/>
<dbReference type="SGD" id="S000005260">
    <property type="gene designation" value="PHA2"/>
</dbReference>
<dbReference type="VEuPathDB" id="FungiDB:YNL316C"/>
<dbReference type="eggNOG" id="KOG2797">
    <property type="taxonomic scope" value="Eukaryota"/>
</dbReference>
<dbReference type="HOGENOM" id="CLU_035008_5_1_1"/>
<dbReference type="InParanoid" id="P32452"/>
<dbReference type="OMA" id="PLMIYRE"/>
<dbReference type="OrthoDB" id="983542at2759"/>
<dbReference type="BioCyc" id="YEAST:MONOMER3O-279"/>
<dbReference type="UniPathway" id="UPA00121">
    <property type="reaction ID" value="UER00345"/>
</dbReference>
<dbReference type="BioGRID-ORCS" id="855400">
    <property type="hits" value="7 hits in 10 CRISPR screens"/>
</dbReference>
<dbReference type="PRO" id="PR:P32452"/>
<dbReference type="Proteomes" id="UP000002311">
    <property type="component" value="Chromosome XIV"/>
</dbReference>
<dbReference type="RNAct" id="P32452">
    <property type="molecule type" value="protein"/>
</dbReference>
<dbReference type="GO" id="GO:0005737">
    <property type="term" value="C:cytoplasm"/>
    <property type="evidence" value="ECO:0007005"/>
    <property type="project" value="SGD"/>
</dbReference>
<dbReference type="GO" id="GO:0004664">
    <property type="term" value="F:prephenate dehydratase activity"/>
    <property type="evidence" value="ECO:0000315"/>
    <property type="project" value="SGD"/>
</dbReference>
<dbReference type="GO" id="GO:0009094">
    <property type="term" value="P:L-phenylalanine biosynthetic process"/>
    <property type="evidence" value="ECO:0000315"/>
    <property type="project" value="SGD"/>
</dbReference>
<dbReference type="CDD" id="cd04905">
    <property type="entry name" value="ACT_CM-PDT"/>
    <property type="match status" value="1"/>
</dbReference>
<dbReference type="CDD" id="cd13532">
    <property type="entry name" value="PBP2_PDT_like"/>
    <property type="match status" value="1"/>
</dbReference>
<dbReference type="FunFam" id="3.30.70.260:FF:000101">
    <property type="entry name" value="Prephenate dehydratase"/>
    <property type="match status" value="1"/>
</dbReference>
<dbReference type="FunFam" id="3.40.190.10:FF:000254">
    <property type="entry name" value="Prephenate dehydratase"/>
    <property type="match status" value="1"/>
</dbReference>
<dbReference type="Gene3D" id="3.30.70.260">
    <property type="match status" value="1"/>
</dbReference>
<dbReference type="Gene3D" id="3.40.190.10">
    <property type="entry name" value="Periplasmic binding protein-like II"/>
    <property type="match status" value="2"/>
</dbReference>
<dbReference type="InterPro" id="IPR045865">
    <property type="entry name" value="ACT-like_dom_sf"/>
</dbReference>
<dbReference type="InterPro" id="IPR002912">
    <property type="entry name" value="ACT_dom"/>
</dbReference>
<dbReference type="InterPro" id="IPR008242">
    <property type="entry name" value="Chor_mutase/pphenate_deHydtase"/>
</dbReference>
<dbReference type="InterPro" id="IPR001086">
    <property type="entry name" value="Preph_deHydtase"/>
</dbReference>
<dbReference type="PANTHER" id="PTHR21022">
    <property type="entry name" value="PREPHENATE DEHYDRATASE P PROTEIN"/>
    <property type="match status" value="1"/>
</dbReference>
<dbReference type="PANTHER" id="PTHR21022:SF19">
    <property type="entry name" value="PREPHENATE DEHYDRATASE-RELATED"/>
    <property type="match status" value="1"/>
</dbReference>
<dbReference type="Pfam" id="PF00800">
    <property type="entry name" value="PDT"/>
    <property type="match status" value="1"/>
</dbReference>
<dbReference type="PIRSF" id="PIRSF001500">
    <property type="entry name" value="Chor_mut_pdt_Ppr"/>
    <property type="match status" value="1"/>
</dbReference>
<dbReference type="SUPFAM" id="SSF55021">
    <property type="entry name" value="ACT-like"/>
    <property type="match status" value="1"/>
</dbReference>
<dbReference type="SUPFAM" id="SSF53850">
    <property type="entry name" value="Periplasmic binding protein-like II"/>
    <property type="match status" value="1"/>
</dbReference>
<dbReference type="PROSITE" id="PS51671">
    <property type="entry name" value="ACT"/>
    <property type="match status" value="1"/>
</dbReference>
<dbReference type="PROSITE" id="PS51171">
    <property type="entry name" value="PREPHENATE_DEHYDR_3"/>
    <property type="match status" value="1"/>
</dbReference>
<comment type="function">
    <text evidence="7 8">Catayzes the decarboxylation/dehydration of prephenate to phenylpyruvate.</text>
</comment>
<comment type="catalytic activity">
    <reaction evidence="7 8">
        <text>prephenate + H(+) = 3-phenylpyruvate + CO2 + H2O</text>
        <dbReference type="Rhea" id="RHEA:21648"/>
        <dbReference type="ChEBI" id="CHEBI:15377"/>
        <dbReference type="ChEBI" id="CHEBI:15378"/>
        <dbReference type="ChEBI" id="CHEBI:16526"/>
        <dbReference type="ChEBI" id="CHEBI:18005"/>
        <dbReference type="ChEBI" id="CHEBI:29934"/>
        <dbReference type="EC" id="4.2.1.51"/>
    </reaction>
    <physiologicalReaction direction="left-to-right" evidence="7 8">
        <dbReference type="Rhea" id="RHEA:21649"/>
    </physiologicalReaction>
</comment>
<comment type="pathway">
    <text evidence="7">Amino-acid biosynthesis; L-phenylalanine biosynthesis; phenylpyruvate from prephenate: step 1/1.</text>
</comment>
<comment type="subcellular location">
    <subcellularLocation>
        <location evidence="3">Cytoplasm</location>
    </subcellularLocation>
</comment>
<comment type="induction">
    <text evidence="5">By L-phenylalanine.</text>
</comment>
<comment type="miscellaneous">
    <text evidence="4">Present with 2020 molecules/cell in log phase SD medium.</text>
</comment>
<comment type="sequence caution" evidence="6">
    <conflict type="erroneous initiation">
        <sequence resource="EMBL-CDS" id="AAA34448"/>
    </conflict>
</comment>
<comment type="sequence caution" evidence="6">
    <conflict type="erroneous initiation">
        <sequence resource="EMBL-CDS" id="CAA86380"/>
    </conflict>
</comment>
<comment type="sequence caution" evidence="6">
    <conflict type="erroneous initiation">
        <sequence resource="EMBL-CDS" id="CAA96246"/>
    </conflict>
</comment>
<evidence type="ECO:0000255" key="1">
    <source>
        <dbReference type="PROSITE-ProRule" id="PRU00517"/>
    </source>
</evidence>
<evidence type="ECO:0000255" key="2">
    <source>
        <dbReference type="PROSITE-ProRule" id="PRU01007"/>
    </source>
</evidence>
<evidence type="ECO:0000269" key="3">
    <source>
    </source>
</evidence>
<evidence type="ECO:0000269" key="4">
    <source>
    </source>
</evidence>
<evidence type="ECO:0000269" key="5">
    <source>
    </source>
</evidence>
<evidence type="ECO:0000305" key="6"/>
<evidence type="ECO:0000305" key="7">
    <source>
    </source>
</evidence>
<evidence type="ECO:0000305" key="8">
    <source>
    </source>
</evidence>
<gene>
    <name type="primary">PHA2</name>
    <name type="ordered locus">YNL316C</name>
    <name type="ORF">N0351</name>
</gene>
<reference key="1">
    <citation type="journal article" date="1995" name="Yeast">
        <title>Sequencing analysis of a 24.7 kb fragment of yeast chromosome XIV identifies six known genes, a new member of the hexose transporter family and ten new open reading frames.</title>
        <authorList>
            <person name="Maftahi M."/>
            <person name="Nicaud J.-M."/>
            <person name="Levesque H."/>
            <person name="Gaillardin C."/>
        </authorList>
    </citation>
    <scope>NUCLEOTIDE SEQUENCE [GENOMIC DNA]</scope>
    <source>
        <strain>S288c / FY1676</strain>
    </source>
</reference>
<reference key="2">
    <citation type="journal article" date="1997" name="Nature">
        <title>The nucleotide sequence of Saccharomyces cerevisiae chromosome XIV and its evolutionary implications.</title>
        <authorList>
            <person name="Philippsen P."/>
            <person name="Kleine K."/>
            <person name="Poehlmann R."/>
            <person name="Duesterhoeft A."/>
            <person name="Hamberg K."/>
            <person name="Hegemann J.H."/>
            <person name="Obermaier B."/>
            <person name="Urrestarazu L.A."/>
            <person name="Aert R."/>
            <person name="Albermann K."/>
            <person name="Altmann R."/>
            <person name="Andre B."/>
            <person name="Baladron V."/>
            <person name="Ballesta J.P.G."/>
            <person name="Becam A.-M."/>
            <person name="Beinhauer J.D."/>
            <person name="Boskovic J."/>
            <person name="Buitrago M.J."/>
            <person name="Bussereau F."/>
            <person name="Coster F."/>
            <person name="Crouzet M."/>
            <person name="D'Angelo M."/>
            <person name="Dal Pero F."/>
            <person name="De Antoni A."/>
            <person name="del Rey F."/>
            <person name="Doignon F."/>
            <person name="Domdey H."/>
            <person name="Dubois E."/>
            <person name="Fiedler T.A."/>
            <person name="Fleig U."/>
            <person name="Floeth M."/>
            <person name="Fritz C."/>
            <person name="Gaillardin C."/>
            <person name="Garcia-Cantalejo J.M."/>
            <person name="Glansdorff N."/>
            <person name="Goffeau A."/>
            <person name="Gueldener U."/>
            <person name="Herbert C.J."/>
            <person name="Heumann K."/>
            <person name="Heuss-Neitzel D."/>
            <person name="Hilbert H."/>
            <person name="Hinni K."/>
            <person name="Iraqui Houssaini I."/>
            <person name="Jacquet M."/>
            <person name="Jimenez A."/>
            <person name="Jonniaux J.-L."/>
            <person name="Karpfinger-Hartl L."/>
            <person name="Lanfranchi G."/>
            <person name="Lepingle A."/>
            <person name="Levesque H."/>
            <person name="Lyck R."/>
            <person name="Maftahi M."/>
            <person name="Mallet L."/>
            <person name="Maurer C.T.C."/>
            <person name="Messenguy F."/>
            <person name="Mewes H.-W."/>
            <person name="Moestl D."/>
            <person name="Nasr F."/>
            <person name="Nicaud J.-M."/>
            <person name="Niedenthal R.K."/>
            <person name="Pandolfo D."/>
            <person name="Pierard A."/>
            <person name="Piravandi E."/>
            <person name="Planta R.J."/>
            <person name="Pohl T.M."/>
            <person name="Purnelle B."/>
            <person name="Rebischung C."/>
            <person name="Remacha M.A."/>
            <person name="Revuelta J.L."/>
            <person name="Rinke M."/>
            <person name="Saiz J.E."/>
            <person name="Sartorello F."/>
            <person name="Scherens B."/>
            <person name="Sen-Gupta M."/>
            <person name="Soler-Mira A."/>
            <person name="Urbanus J.H.M."/>
            <person name="Valle G."/>
            <person name="Van Dyck L."/>
            <person name="Verhasselt P."/>
            <person name="Vierendeels F."/>
            <person name="Vissers S."/>
            <person name="Voet M."/>
            <person name="Volckaert G."/>
            <person name="Wach A."/>
            <person name="Wambutt R."/>
            <person name="Wedler H."/>
            <person name="Zollner A."/>
            <person name="Hani J."/>
        </authorList>
    </citation>
    <scope>NUCLEOTIDE SEQUENCE [LARGE SCALE GENOMIC DNA]</scope>
    <source>
        <strain>ATCC 204508 / S288c</strain>
    </source>
</reference>
<reference key="3">
    <citation type="journal article" date="2014" name="G3 (Bethesda)">
        <title>The reference genome sequence of Saccharomyces cerevisiae: Then and now.</title>
        <authorList>
            <person name="Engel S.R."/>
            <person name="Dietrich F.S."/>
            <person name="Fisk D.G."/>
            <person name="Binkley G."/>
            <person name="Balakrishnan R."/>
            <person name="Costanzo M.C."/>
            <person name="Dwight S.S."/>
            <person name="Hitz B.C."/>
            <person name="Karra K."/>
            <person name="Nash R.S."/>
            <person name="Weng S."/>
            <person name="Wong E.D."/>
            <person name="Lloyd P."/>
            <person name="Skrzypek M.S."/>
            <person name="Miyasato S.R."/>
            <person name="Simison M."/>
            <person name="Cherry J.M."/>
        </authorList>
    </citation>
    <scope>GENOME REANNOTATION</scope>
    <source>
        <strain>ATCC 204508 / S288c</strain>
    </source>
</reference>
<reference key="4">
    <citation type="journal article" date="1992" name="J. Biol. Chem.">
        <title>Characterization of ATP11 and detection of the encoded protein in mitochondria of Saccharomyces cerevisiae.</title>
        <authorList>
            <person name="Ackerman S.H."/>
            <person name="Martin J."/>
            <person name="Tzagoloff A."/>
        </authorList>
    </citation>
    <scope>NUCLEOTIDE SEQUENCE [GENOMIC DNA] OF 1-59</scope>
    <scope>FUNCTION</scope>
    <scope>CATALYTIC ACTIVITY</scope>
</reference>
<reference key="5">
    <citation type="journal article" date="1967" name="Eur. J. Biochem.">
        <title>Regulation der Biosynthese der aromatischen Aminosaeuren in Saccharomyces cerevisiae.</title>
        <authorList>
            <person name="Lingens F."/>
            <person name="Goebel W."/>
            <person name="Uesseler H."/>
        </authorList>
    </citation>
    <scope>FUNCTION</scope>
    <scope>CATALYTIC ACTIVITY</scope>
    <scope>INDUCTION</scope>
</reference>
<reference key="6">
    <citation type="journal article" date="2003" name="Nature">
        <title>Sequencing and comparison of yeast species to identify genes and regulatory elements.</title>
        <authorList>
            <person name="Kellis M."/>
            <person name="Patterson N."/>
            <person name="Endrizzi M."/>
            <person name="Birren B.W."/>
            <person name="Lander E.S."/>
        </authorList>
    </citation>
    <scope>IDENTIFICATION OF PROBABLE INITIATION SITE</scope>
</reference>
<reference key="7">
    <citation type="journal article" date="2003" name="Nature">
        <title>Global analysis of protein localization in budding yeast.</title>
        <authorList>
            <person name="Huh W.-K."/>
            <person name="Falvo J.V."/>
            <person name="Gerke L.C."/>
            <person name="Carroll A.S."/>
            <person name="Howson R.W."/>
            <person name="Weissman J.S."/>
            <person name="O'Shea E.K."/>
        </authorList>
    </citation>
    <scope>SUBCELLULAR LOCATION [LARGE SCALE ANALYSIS]</scope>
</reference>
<reference key="8">
    <citation type="journal article" date="2003" name="Nature">
        <title>Global analysis of protein expression in yeast.</title>
        <authorList>
            <person name="Ghaemmaghami S."/>
            <person name="Huh W.-K."/>
            <person name="Bower K."/>
            <person name="Howson R.W."/>
            <person name="Belle A."/>
            <person name="Dephoure N."/>
            <person name="O'Shea E.K."/>
            <person name="Weissman J.S."/>
        </authorList>
    </citation>
    <scope>LEVEL OF PROTEIN EXPRESSION [LARGE SCALE ANALYSIS]</scope>
</reference>
<sequence>MASKTLRVLFLGPKGTYSHQAALQQFQSTSDVEYLPAASIPQCFNQLENDTSIDYSVVPLENSTNGQVVFSYDLLRDRMIKKALSLPAPADTNRITPDIEVIAEQYVPITHCLISPIQLPNGIASLGNFEEVIIHSHPQVWGQVECYLRSMAEKFPQVTFIRLDCSSTSESVNQCIRSSTADCDNILHLAIASETAAQLHKAYIIEHSINDKLGNTTRFLVLKRRENAGDNEVEDTGLLRVNLLTFTTRQDDPGSLVDVLNILKIHSLNMCSINSRPFHLDEHDRNWRYLFFIEYYTEKNTPKNKEKFYEDISDKSKQWCLWGTFPRNERYYHK</sequence>
<keyword id="KW-0028">Amino-acid biosynthesis</keyword>
<keyword id="KW-0057">Aromatic amino acid biosynthesis</keyword>
<keyword id="KW-0963">Cytoplasm</keyword>
<keyword id="KW-0456">Lyase</keyword>
<keyword id="KW-0584">Phenylalanine biosynthesis</keyword>
<keyword id="KW-1185">Reference proteome</keyword>